<evidence type="ECO:0000250" key="1">
    <source>
        <dbReference type="UniProtKB" id="O49519"/>
    </source>
</evidence>
<evidence type="ECO:0000255" key="2"/>
<evidence type="ECO:0000256" key="3">
    <source>
        <dbReference type="SAM" id="MobiDB-lite"/>
    </source>
</evidence>
<evidence type="ECO:0000269" key="4">
    <source>
    </source>
</evidence>
<evidence type="ECO:0000269" key="5">
    <source>
    </source>
</evidence>
<evidence type="ECO:0000303" key="6">
    <source>
    </source>
</evidence>
<evidence type="ECO:0000303" key="7">
    <source>
    </source>
</evidence>
<evidence type="ECO:0000305" key="8"/>
<organism>
    <name type="scientific">Zea mays</name>
    <name type="common">Maize</name>
    <dbReference type="NCBI Taxonomy" id="4577"/>
    <lineage>
        <taxon>Eukaryota</taxon>
        <taxon>Viridiplantae</taxon>
        <taxon>Streptophyta</taxon>
        <taxon>Embryophyta</taxon>
        <taxon>Tracheophyta</taxon>
        <taxon>Spermatophyta</taxon>
        <taxon>Magnoliopsida</taxon>
        <taxon>Liliopsida</taxon>
        <taxon>Poales</taxon>
        <taxon>Poaceae</taxon>
        <taxon>PACMAD clade</taxon>
        <taxon>Panicoideae</taxon>
        <taxon>Andropogonodae</taxon>
        <taxon>Andropogoneae</taxon>
        <taxon>Tripsacinae</taxon>
        <taxon>Zea</taxon>
    </lineage>
</organism>
<comment type="function">
    <molecule>ESR3p</molecule>
    <text evidence="1">Extracellular signal peptide that regulates cell fate.</text>
</comment>
<comment type="subcellular location">
    <molecule>ESR3p</molecule>
    <subcellularLocation>
        <location evidence="4">Secreted</location>
        <location evidence="4">Extracellular space</location>
    </subcellularLocation>
</comment>
<comment type="tissue specificity">
    <molecule>ESR3p</molecule>
    <text evidence="4 5">Seed endosperm.</text>
</comment>
<comment type="developmental stage">
    <molecule>ESR3p</molecule>
    <text evidence="4 5">Expressed specifically in the embryo surrounding region at the micropylar end of the seed endosperm at early stages (4 to 7 days after pollination, DAP) and ever-decreasing parts of the suspensor at subsequent stages (at protein level).</text>
</comment>
<comment type="PTM">
    <molecule>ESR3p</molecule>
    <text evidence="1">The O-glycosylation (arabinosylation) of the hydroxyproline Pro-78 enhances binding affinity of the ESR3p peptide for its receptor.</text>
</comment>
<comment type="similarity">
    <text evidence="8">Belongs to the CLV3/ESR signal peptide family.</text>
</comment>
<accession>O24567</accession>
<dbReference type="EMBL" id="X99970">
    <property type="protein sequence ID" value="CAA68232.1"/>
    <property type="molecule type" value="Genomic_DNA"/>
</dbReference>
<dbReference type="PIR" id="T03283">
    <property type="entry name" value="T03283"/>
</dbReference>
<dbReference type="GlyCosmos" id="O24567">
    <property type="glycosylation" value="1 site, No reported glycans"/>
</dbReference>
<dbReference type="PaxDb" id="4577-GRMZM2G140302_P01"/>
<dbReference type="MaizeGDB" id="247978"/>
<dbReference type="eggNOG" id="ENOG502R4SP">
    <property type="taxonomic scope" value="Eukaryota"/>
</dbReference>
<dbReference type="HOGENOM" id="CLU_1930598_0_0_1"/>
<dbReference type="InParanoid" id="O24567"/>
<dbReference type="OMA" id="MGMVAIM"/>
<dbReference type="OrthoDB" id="662284at2759"/>
<dbReference type="Proteomes" id="UP000007305">
    <property type="component" value="Unplaced"/>
</dbReference>
<dbReference type="ExpressionAtlas" id="O24567">
    <property type="expression patterns" value="baseline and differential"/>
</dbReference>
<dbReference type="GO" id="GO:0048046">
    <property type="term" value="C:apoplast"/>
    <property type="evidence" value="ECO:0000250"/>
    <property type="project" value="UniProtKB"/>
</dbReference>
<dbReference type="GO" id="GO:0033612">
    <property type="term" value="F:receptor serine/threonine kinase binding"/>
    <property type="evidence" value="ECO:0000250"/>
    <property type="project" value="UniProtKB"/>
</dbReference>
<dbReference type="GO" id="GO:0045168">
    <property type="term" value="P:cell-cell signaling involved in cell fate commitment"/>
    <property type="evidence" value="ECO:0000250"/>
    <property type="project" value="UniProtKB"/>
</dbReference>
<proteinExistence type="evidence at protein level"/>
<keyword id="KW-0217">Developmental protein</keyword>
<keyword id="KW-0221">Differentiation</keyword>
<keyword id="KW-0325">Glycoprotein</keyword>
<keyword id="KW-0379">Hydroxylation</keyword>
<keyword id="KW-1185">Reference proteome</keyword>
<keyword id="KW-0964">Secreted</keyword>
<keyword id="KW-0732">Signal</keyword>
<feature type="signal peptide" evidence="2">
    <location>
        <begin position="1"/>
        <end position="26"/>
    </location>
</feature>
<feature type="chain" id="PRO_0000401229" description="CLAVATA3/ESR (CLE)-related protein ESR3">
    <location>
        <begin position="27"/>
        <end position="125"/>
    </location>
</feature>
<feature type="peptide" id="PRO_0000401230" description="ESR3p" evidence="1">
    <location>
        <begin position="72"/>
        <end position="83"/>
    </location>
</feature>
<feature type="region of interest" description="Disordered" evidence="3">
    <location>
        <begin position="45"/>
        <end position="125"/>
    </location>
</feature>
<feature type="modified residue" description="Hydroxyproline" evidence="1">
    <location>
        <position position="75"/>
    </location>
</feature>
<feature type="modified residue" description="Hydroxyproline" evidence="1">
    <location>
        <position position="78"/>
    </location>
</feature>
<feature type="glycosylation site" description="O-linked (Ara...) hydroxyproline" evidence="1">
    <location>
        <position position="78"/>
    </location>
</feature>
<name>ESR3_MAIZE</name>
<sequence length="125" mass="13857">MASRMGMVAIMSLFVYAIVVPTSVNANAWQTDDKPGVNRNMEMQQQQGGFIGHRPRLASFNRASNQEGDRKRTVPSGPNHKHNNIPSHTPHHPPSYVQALYEDDRTITSPGPSKSIGPPPLPDRY</sequence>
<reference key="1">
    <citation type="journal article" date="1997" name="Plant J.">
        <title>ZmEsr, a novel endosperm-specific gene expressed in a restricted region around the maize embryo.</title>
        <authorList>
            <person name="Opsahl-Ferstad H.G."/>
            <person name="Le Deunff E."/>
            <person name="Dumas C."/>
            <person name="Rogowsky P.M."/>
        </authorList>
    </citation>
    <scope>NUCLEOTIDE SEQUENCE [GENOMIC DNA]</scope>
    <scope>TISSUE SPECIFICITY</scope>
    <scope>DEVELOPMENTAL STAGE</scope>
    <source>
        <strain>cv. A188</strain>
    </source>
</reference>
<reference key="2">
    <citation type="journal article" date="2002" name="J. Exp. Bot.">
        <title>Esr proteins are secreted by the cells of the embryo surrounding region.</title>
        <authorList>
            <person name="Bonello J.-F."/>
            <person name="Sevilla-Lecoq S."/>
            <person name="Berne A."/>
            <person name="Risueno M.-C."/>
            <person name="Dumas C."/>
            <person name="Rogowsky P.M."/>
        </authorList>
    </citation>
    <scope>TISSUE SPECIFICITY</scope>
    <scope>DEVELOPMENTAL STAGE</scope>
    <scope>SUBCELLULAR LOCATION</scope>
</reference>
<reference key="3">
    <citation type="journal article" date="2008" name="Cell. Mol. Life Sci.">
        <title>The CLE family of plant polypeptide signaling molecules.</title>
        <authorList>
            <person name="Jun J.H."/>
            <person name="Fiume E."/>
            <person name="Fletcher J.C."/>
        </authorList>
    </citation>
    <scope>REVIEW</scope>
</reference>
<reference key="4">
    <citation type="journal article" date="2010" name="Protoplasma">
        <title>CLE peptide signaling during plant development.</title>
        <authorList>
            <person name="Wang G."/>
            <person name="Fiers M."/>
        </authorList>
    </citation>
    <scope>REVIEW</scope>
</reference>
<gene>
    <name evidence="6" type="primary">ESR3</name>
    <name evidence="7" type="synonym">ESR3g2</name>
</gene>
<protein>
    <recommendedName>
        <fullName evidence="6">CLAVATA3/ESR (CLE)-related protein ESR3</fullName>
        <shortName evidence="6">ZmESR3</shortName>
    </recommendedName>
    <alternativeName>
        <fullName evidence="7">Embryo surrounding region protein 3</fullName>
    </alternativeName>
    <component>
        <recommendedName>
            <fullName evidence="7">ESR3p</fullName>
        </recommendedName>
    </component>
</protein>